<accession>A1A892</accession>
<reference key="1">
    <citation type="journal article" date="2007" name="J. Bacteriol.">
        <title>The genome sequence of avian pathogenic Escherichia coli strain O1:K1:H7 shares strong similarities with human extraintestinal pathogenic E. coli genomes.</title>
        <authorList>
            <person name="Johnson T.J."/>
            <person name="Kariyawasam S."/>
            <person name="Wannemuehler Y."/>
            <person name="Mangiamele P."/>
            <person name="Johnson S.J."/>
            <person name="Doetkott C."/>
            <person name="Skyberg J.A."/>
            <person name="Lynne A.M."/>
            <person name="Johnson J.R."/>
            <person name="Nolan L.K."/>
        </authorList>
    </citation>
    <scope>NUCLEOTIDE SEQUENCE [LARGE SCALE GENOMIC DNA]</scope>
</reference>
<sequence>MKFIIKLFPEITIKSQSVRLRFIKILTGNIRNVLKHYDETLAVVRHWDNIEVRAKDENQRLAIRDALTRIPGIHHILEVEDVPFTDMHDIFEKALVQYRDQLEGKTFCVRVKRRGKHDFSSIDVERYVGGGLNQHIESARVKLTNPEVTVHLEVEDDRLLLIKGRYEGIGGFPIGTQEDVLSLISGGFDSGVSSYMLMRRGCRVHYCFFNLGGAAHEIGVRQVAHYLWNRFGSSHRVRFVAINFEPVVGEILEKIDDGQMGVILKRMMVRAASKVAERYGVQALVTGEALGQVSSQTLTNLRLIDNVSDTLILRPLISYDKEHIINLARQIGTEDFARTMPEYCGVISKSPTVKAVKSKIEAEEEKFDFSILDKVVEEANNVDIREIAQQTEQEVVEVETVNGFGPNDVILDIRSIDEQEDKPLKVEGIDVVSLPFYKLSTKFGDLDQSKTWLLWCERGVMSRLQALYLREQGFNNVKVYRP</sequence>
<keyword id="KW-0067">ATP-binding</keyword>
<keyword id="KW-0963">Cytoplasm</keyword>
<keyword id="KW-1015">Disulfide bond</keyword>
<keyword id="KW-0547">Nucleotide-binding</keyword>
<keyword id="KW-0676">Redox-active center</keyword>
<keyword id="KW-1185">Reference proteome</keyword>
<keyword id="KW-0694">RNA-binding</keyword>
<keyword id="KW-0784">Thiamine biosynthesis</keyword>
<keyword id="KW-0808">Transferase</keyword>
<keyword id="KW-0820">tRNA-binding</keyword>
<evidence type="ECO:0000255" key="1">
    <source>
        <dbReference type="HAMAP-Rule" id="MF_00021"/>
    </source>
</evidence>
<gene>
    <name evidence="1" type="primary">thiI</name>
    <name type="ordered locus">Ecok1_03880</name>
    <name type="ORF">APECO1_1588</name>
</gene>
<protein>
    <recommendedName>
        <fullName evidence="1">tRNA sulfurtransferase</fullName>
        <ecNumber evidence="1">2.8.1.4</ecNumber>
    </recommendedName>
    <alternativeName>
        <fullName evidence="1">Sulfur carrier protein ThiS sulfurtransferase</fullName>
    </alternativeName>
    <alternativeName>
        <fullName evidence="1">Thiamine biosynthesis protein ThiI</fullName>
    </alternativeName>
    <alternativeName>
        <fullName evidence="1">tRNA 4-thiouridine synthase</fullName>
    </alternativeName>
</protein>
<dbReference type="EC" id="2.8.1.4" evidence="1"/>
<dbReference type="EMBL" id="CP000468">
    <property type="protein sequence ID" value="ABI99881.1"/>
    <property type="molecule type" value="Genomic_DNA"/>
</dbReference>
<dbReference type="RefSeq" id="WP_000668687.1">
    <property type="nucleotide sequence ID" value="NZ_CADILS010000009.1"/>
</dbReference>
<dbReference type="SMR" id="A1A892"/>
<dbReference type="KEGG" id="ecv:APECO1_1588"/>
<dbReference type="HOGENOM" id="CLU_037952_4_1_6"/>
<dbReference type="UniPathway" id="UPA00060"/>
<dbReference type="Proteomes" id="UP000008216">
    <property type="component" value="Chromosome"/>
</dbReference>
<dbReference type="GO" id="GO:0005829">
    <property type="term" value="C:cytosol"/>
    <property type="evidence" value="ECO:0007669"/>
    <property type="project" value="TreeGrafter"/>
</dbReference>
<dbReference type="GO" id="GO:0005524">
    <property type="term" value="F:ATP binding"/>
    <property type="evidence" value="ECO:0007669"/>
    <property type="project" value="UniProtKB-UniRule"/>
</dbReference>
<dbReference type="GO" id="GO:0004810">
    <property type="term" value="F:CCA tRNA nucleotidyltransferase activity"/>
    <property type="evidence" value="ECO:0007669"/>
    <property type="project" value="InterPro"/>
</dbReference>
<dbReference type="GO" id="GO:0000049">
    <property type="term" value="F:tRNA binding"/>
    <property type="evidence" value="ECO:0007669"/>
    <property type="project" value="UniProtKB-UniRule"/>
</dbReference>
<dbReference type="GO" id="GO:0140741">
    <property type="term" value="F:tRNA-uracil-4 sulfurtransferase activity"/>
    <property type="evidence" value="ECO:0007669"/>
    <property type="project" value="UniProtKB-EC"/>
</dbReference>
<dbReference type="GO" id="GO:0009228">
    <property type="term" value="P:thiamine biosynthetic process"/>
    <property type="evidence" value="ECO:0007669"/>
    <property type="project" value="UniProtKB-KW"/>
</dbReference>
<dbReference type="GO" id="GO:0009229">
    <property type="term" value="P:thiamine diphosphate biosynthetic process"/>
    <property type="evidence" value="ECO:0007669"/>
    <property type="project" value="UniProtKB-UniRule"/>
</dbReference>
<dbReference type="GO" id="GO:0052837">
    <property type="term" value="P:thiazole biosynthetic process"/>
    <property type="evidence" value="ECO:0007669"/>
    <property type="project" value="InterPro"/>
</dbReference>
<dbReference type="GO" id="GO:0002937">
    <property type="term" value="P:tRNA 4-thiouridine biosynthesis"/>
    <property type="evidence" value="ECO:0007669"/>
    <property type="project" value="TreeGrafter"/>
</dbReference>
<dbReference type="CDD" id="cd01712">
    <property type="entry name" value="PPase_ThiI"/>
    <property type="match status" value="1"/>
</dbReference>
<dbReference type="CDD" id="cd00158">
    <property type="entry name" value="RHOD"/>
    <property type="match status" value="1"/>
</dbReference>
<dbReference type="CDD" id="cd11716">
    <property type="entry name" value="THUMP_ThiI"/>
    <property type="match status" value="1"/>
</dbReference>
<dbReference type="FunFam" id="3.30.2130.30:FF:000002">
    <property type="entry name" value="tRNA sulfurtransferase"/>
    <property type="match status" value="1"/>
</dbReference>
<dbReference type="FunFam" id="3.40.250.10:FF:000003">
    <property type="entry name" value="tRNA sulfurtransferase"/>
    <property type="match status" value="1"/>
</dbReference>
<dbReference type="FunFam" id="3.40.50.620:FF:000029">
    <property type="entry name" value="tRNA sulfurtransferase"/>
    <property type="match status" value="1"/>
</dbReference>
<dbReference type="Gene3D" id="3.30.2130.30">
    <property type="match status" value="1"/>
</dbReference>
<dbReference type="Gene3D" id="3.40.50.620">
    <property type="entry name" value="HUPs"/>
    <property type="match status" value="1"/>
</dbReference>
<dbReference type="Gene3D" id="3.40.250.10">
    <property type="entry name" value="Rhodanese-like domain"/>
    <property type="match status" value="1"/>
</dbReference>
<dbReference type="HAMAP" id="MF_00021">
    <property type="entry name" value="ThiI"/>
    <property type="match status" value="1"/>
</dbReference>
<dbReference type="InterPro" id="IPR001763">
    <property type="entry name" value="Rhodanese-like_dom"/>
</dbReference>
<dbReference type="InterPro" id="IPR036873">
    <property type="entry name" value="Rhodanese-like_dom_sf"/>
</dbReference>
<dbReference type="InterPro" id="IPR014729">
    <property type="entry name" value="Rossmann-like_a/b/a_fold"/>
</dbReference>
<dbReference type="InterPro" id="IPR020536">
    <property type="entry name" value="ThiI_AANH"/>
</dbReference>
<dbReference type="InterPro" id="IPR054173">
    <property type="entry name" value="ThiI_fer"/>
</dbReference>
<dbReference type="InterPro" id="IPR049961">
    <property type="entry name" value="ThiI_N"/>
</dbReference>
<dbReference type="InterPro" id="IPR026340">
    <property type="entry name" value="THII_Thiazole_biosynth_dom"/>
</dbReference>
<dbReference type="InterPro" id="IPR004114">
    <property type="entry name" value="THUMP_dom"/>
</dbReference>
<dbReference type="InterPro" id="IPR049962">
    <property type="entry name" value="THUMP_ThiI"/>
</dbReference>
<dbReference type="InterPro" id="IPR003720">
    <property type="entry name" value="tRNA_STrfase"/>
</dbReference>
<dbReference type="InterPro" id="IPR050102">
    <property type="entry name" value="tRNA_sulfurtransferase_ThiI"/>
</dbReference>
<dbReference type="NCBIfam" id="TIGR04271">
    <property type="entry name" value="ThiI_C_thiazole"/>
    <property type="match status" value="1"/>
</dbReference>
<dbReference type="NCBIfam" id="TIGR00342">
    <property type="entry name" value="tRNA uracil 4-sulfurtransferase ThiI"/>
    <property type="match status" value="1"/>
</dbReference>
<dbReference type="PANTHER" id="PTHR43209">
    <property type="entry name" value="TRNA SULFURTRANSFERASE"/>
    <property type="match status" value="1"/>
</dbReference>
<dbReference type="PANTHER" id="PTHR43209:SF1">
    <property type="entry name" value="TRNA SULFURTRANSFERASE"/>
    <property type="match status" value="1"/>
</dbReference>
<dbReference type="Pfam" id="PF02568">
    <property type="entry name" value="ThiI"/>
    <property type="match status" value="1"/>
</dbReference>
<dbReference type="Pfam" id="PF22025">
    <property type="entry name" value="ThiI_fer"/>
    <property type="match status" value="1"/>
</dbReference>
<dbReference type="Pfam" id="PF02926">
    <property type="entry name" value="THUMP"/>
    <property type="match status" value="1"/>
</dbReference>
<dbReference type="SMART" id="SM00981">
    <property type="entry name" value="THUMP"/>
    <property type="match status" value="1"/>
</dbReference>
<dbReference type="SUPFAM" id="SSF52402">
    <property type="entry name" value="Adenine nucleotide alpha hydrolases-like"/>
    <property type="match status" value="1"/>
</dbReference>
<dbReference type="SUPFAM" id="SSF52821">
    <property type="entry name" value="Rhodanese/Cell cycle control phosphatase"/>
    <property type="match status" value="1"/>
</dbReference>
<dbReference type="SUPFAM" id="SSF143437">
    <property type="entry name" value="THUMP domain-like"/>
    <property type="match status" value="1"/>
</dbReference>
<dbReference type="PROSITE" id="PS50206">
    <property type="entry name" value="RHODANESE_3"/>
    <property type="match status" value="1"/>
</dbReference>
<dbReference type="PROSITE" id="PS51165">
    <property type="entry name" value="THUMP"/>
    <property type="match status" value="1"/>
</dbReference>
<name>THII_ECOK1</name>
<feature type="chain" id="PRO_1000074221" description="tRNA sulfurtransferase">
    <location>
        <begin position="1"/>
        <end position="482"/>
    </location>
</feature>
<feature type="domain" description="THUMP" evidence="1">
    <location>
        <begin position="61"/>
        <end position="165"/>
    </location>
</feature>
<feature type="domain" description="Rhodanese" evidence="1">
    <location>
        <begin position="404"/>
        <end position="482"/>
    </location>
</feature>
<feature type="active site" description="Cysteine persulfide intermediate" evidence="1">
    <location>
        <position position="456"/>
    </location>
</feature>
<feature type="binding site" evidence="1">
    <location>
        <begin position="183"/>
        <end position="184"/>
    </location>
    <ligand>
        <name>ATP</name>
        <dbReference type="ChEBI" id="CHEBI:30616"/>
    </ligand>
</feature>
<feature type="binding site" evidence="1">
    <location>
        <position position="265"/>
    </location>
    <ligand>
        <name>ATP</name>
        <dbReference type="ChEBI" id="CHEBI:30616"/>
    </ligand>
</feature>
<feature type="binding site" evidence="1">
    <location>
        <position position="287"/>
    </location>
    <ligand>
        <name>ATP</name>
        <dbReference type="ChEBI" id="CHEBI:30616"/>
    </ligand>
</feature>
<feature type="binding site" evidence="1">
    <location>
        <position position="296"/>
    </location>
    <ligand>
        <name>ATP</name>
        <dbReference type="ChEBI" id="CHEBI:30616"/>
    </ligand>
</feature>
<feature type="disulfide bond" description="Redox-active" evidence="1">
    <location>
        <begin position="344"/>
        <end position="456"/>
    </location>
</feature>
<proteinExistence type="inferred from homology"/>
<organism>
    <name type="scientific">Escherichia coli O1:K1 / APEC</name>
    <dbReference type="NCBI Taxonomy" id="405955"/>
    <lineage>
        <taxon>Bacteria</taxon>
        <taxon>Pseudomonadati</taxon>
        <taxon>Pseudomonadota</taxon>
        <taxon>Gammaproteobacteria</taxon>
        <taxon>Enterobacterales</taxon>
        <taxon>Enterobacteriaceae</taxon>
        <taxon>Escherichia</taxon>
    </lineage>
</organism>
<comment type="function">
    <text evidence="1">Catalyzes the ATP-dependent transfer of a sulfur to tRNA to produce 4-thiouridine in position 8 of tRNAs, which functions as a near-UV photosensor. Also catalyzes the transfer of sulfur to the sulfur carrier protein ThiS, forming ThiS-thiocarboxylate. This is a step in the synthesis of thiazole, in the thiamine biosynthesis pathway. The sulfur is donated as persulfide by IscS.</text>
</comment>
<comment type="catalytic activity">
    <reaction evidence="1">
        <text>[ThiI sulfur-carrier protein]-S-sulfanyl-L-cysteine + a uridine in tRNA + 2 reduced [2Fe-2S]-[ferredoxin] + ATP + H(+) = [ThiI sulfur-carrier protein]-L-cysteine + a 4-thiouridine in tRNA + 2 oxidized [2Fe-2S]-[ferredoxin] + AMP + diphosphate</text>
        <dbReference type="Rhea" id="RHEA:24176"/>
        <dbReference type="Rhea" id="RHEA-COMP:10000"/>
        <dbReference type="Rhea" id="RHEA-COMP:10001"/>
        <dbReference type="Rhea" id="RHEA-COMP:13337"/>
        <dbReference type="Rhea" id="RHEA-COMP:13338"/>
        <dbReference type="Rhea" id="RHEA-COMP:13339"/>
        <dbReference type="Rhea" id="RHEA-COMP:13340"/>
        <dbReference type="ChEBI" id="CHEBI:15378"/>
        <dbReference type="ChEBI" id="CHEBI:29950"/>
        <dbReference type="ChEBI" id="CHEBI:30616"/>
        <dbReference type="ChEBI" id="CHEBI:33019"/>
        <dbReference type="ChEBI" id="CHEBI:33737"/>
        <dbReference type="ChEBI" id="CHEBI:33738"/>
        <dbReference type="ChEBI" id="CHEBI:61963"/>
        <dbReference type="ChEBI" id="CHEBI:65315"/>
        <dbReference type="ChEBI" id="CHEBI:136798"/>
        <dbReference type="ChEBI" id="CHEBI:456215"/>
        <dbReference type="EC" id="2.8.1.4"/>
    </reaction>
</comment>
<comment type="catalytic activity">
    <reaction evidence="1">
        <text>[ThiS sulfur-carrier protein]-C-terminal Gly-Gly-AMP + S-sulfanyl-L-cysteinyl-[cysteine desulfurase] + AH2 = [ThiS sulfur-carrier protein]-C-terminal-Gly-aminoethanethioate + L-cysteinyl-[cysteine desulfurase] + A + AMP + 2 H(+)</text>
        <dbReference type="Rhea" id="RHEA:43340"/>
        <dbReference type="Rhea" id="RHEA-COMP:12157"/>
        <dbReference type="Rhea" id="RHEA-COMP:12158"/>
        <dbReference type="Rhea" id="RHEA-COMP:12910"/>
        <dbReference type="Rhea" id="RHEA-COMP:19908"/>
        <dbReference type="ChEBI" id="CHEBI:13193"/>
        <dbReference type="ChEBI" id="CHEBI:15378"/>
        <dbReference type="ChEBI" id="CHEBI:17499"/>
        <dbReference type="ChEBI" id="CHEBI:29950"/>
        <dbReference type="ChEBI" id="CHEBI:61963"/>
        <dbReference type="ChEBI" id="CHEBI:90618"/>
        <dbReference type="ChEBI" id="CHEBI:232372"/>
        <dbReference type="ChEBI" id="CHEBI:456215"/>
    </reaction>
</comment>
<comment type="pathway">
    <text evidence="1">Cofactor biosynthesis; thiamine diphosphate biosynthesis.</text>
</comment>
<comment type="subcellular location">
    <subcellularLocation>
        <location evidence="1">Cytoplasm</location>
    </subcellularLocation>
</comment>
<comment type="similarity">
    <text evidence="1">Belongs to the ThiI family.</text>
</comment>